<dbReference type="EMBL" id="AM920689">
    <property type="protein sequence ID" value="CAP52803.1"/>
    <property type="molecule type" value="Genomic_DNA"/>
</dbReference>
<dbReference type="SMR" id="B0RU61"/>
<dbReference type="KEGG" id="xca:xcc-b100_3438"/>
<dbReference type="HOGENOM" id="CLU_103849_1_2_6"/>
<dbReference type="Proteomes" id="UP000001188">
    <property type="component" value="Chromosome"/>
</dbReference>
<dbReference type="GO" id="GO:0005829">
    <property type="term" value="C:cytosol"/>
    <property type="evidence" value="ECO:0007669"/>
    <property type="project" value="TreeGrafter"/>
</dbReference>
<dbReference type="GO" id="GO:0015935">
    <property type="term" value="C:small ribosomal subunit"/>
    <property type="evidence" value="ECO:0007669"/>
    <property type="project" value="TreeGrafter"/>
</dbReference>
<dbReference type="GO" id="GO:0019843">
    <property type="term" value="F:rRNA binding"/>
    <property type="evidence" value="ECO:0007669"/>
    <property type="project" value="UniProtKB-UniRule"/>
</dbReference>
<dbReference type="GO" id="GO:0003735">
    <property type="term" value="F:structural constituent of ribosome"/>
    <property type="evidence" value="ECO:0007669"/>
    <property type="project" value="InterPro"/>
</dbReference>
<dbReference type="GO" id="GO:0000049">
    <property type="term" value="F:tRNA binding"/>
    <property type="evidence" value="ECO:0007669"/>
    <property type="project" value="UniProtKB-UniRule"/>
</dbReference>
<dbReference type="GO" id="GO:0006412">
    <property type="term" value="P:translation"/>
    <property type="evidence" value="ECO:0007669"/>
    <property type="project" value="UniProtKB-UniRule"/>
</dbReference>
<dbReference type="FunFam" id="1.10.8.50:FF:000001">
    <property type="entry name" value="30S ribosomal protein S13"/>
    <property type="match status" value="1"/>
</dbReference>
<dbReference type="FunFam" id="4.10.910.10:FF:000001">
    <property type="entry name" value="30S ribosomal protein S13"/>
    <property type="match status" value="1"/>
</dbReference>
<dbReference type="Gene3D" id="1.10.8.50">
    <property type="match status" value="1"/>
</dbReference>
<dbReference type="Gene3D" id="4.10.910.10">
    <property type="entry name" value="30s ribosomal protein s13, domain 2"/>
    <property type="match status" value="1"/>
</dbReference>
<dbReference type="HAMAP" id="MF_01315">
    <property type="entry name" value="Ribosomal_uS13"/>
    <property type="match status" value="1"/>
</dbReference>
<dbReference type="InterPro" id="IPR027437">
    <property type="entry name" value="Rbsml_uS13_C"/>
</dbReference>
<dbReference type="InterPro" id="IPR001892">
    <property type="entry name" value="Ribosomal_uS13"/>
</dbReference>
<dbReference type="InterPro" id="IPR010979">
    <property type="entry name" value="Ribosomal_uS13-like_H2TH"/>
</dbReference>
<dbReference type="InterPro" id="IPR019980">
    <property type="entry name" value="Ribosomal_uS13_bac-type"/>
</dbReference>
<dbReference type="InterPro" id="IPR018269">
    <property type="entry name" value="Ribosomal_uS13_CS"/>
</dbReference>
<dbReference type="NCBIfam" id="TIGR03631">
    <property type="entry name" value="uS13_bact"/>
    <property type="match status" value="1"/>
</dbReference>
<dbReference type="PANTHER" id="PTHR10871">
    <property type="entry name" value="30S RIBOSOMAL PROTEIN S13/40S RIBOSOMAL PROTEIN S18"/>
    <property type="match status" value="1"/>
</dbReference>
<dbReference type="PANTHER" id="PTHR10871:SF1">
    <property type="entry name" value="SMALL RIBOSOMAL SUBUNIT PROTEIN US13M"/>
    <property type="match status" value="1"/>
</dbReference>
<dbReference type="Pfam" id="PF00416">
    <property type="entry name" value="Ribosomal_S13"/>
    <property type="match status" value="1"/>
</dbReference>
<dbReference type="PIRSF" id="PIRSF002134">
    <property type="entry name" value="Ribosomal_S13"/>
    <property type="match status" value="1"/>
</dbReference>
<dbReference type="SUPFAM" id="SSF46946">
    <property type="entry name" value="S13-like H2TH domain"/>
    <property type="match status" value="1"/>
</dbReference>
<dbReference type="PROSITE" id="PS00646">
    <property type="entry name" value="RIBOSOMAL_S13_1"/>
    <property type="match status" value="1"/>
</dbReference>
<dbReference type="PROSITE" id="PS50159">
    <property type="entry name" value="RIBOSOMAL_S13_2"/>
    <property type="match status" value="1"/>
</dbReference>
<comment type="function">
    <text evidence="1">Located at the top of the head of the 30S subunit, it contacts several helices of the 16S rRNA. In the 70S ribosome it contacts the 23S rRNA (bridge B1a) and protein L5 of the 50S subunit (bridge B1b), connecting the 2 subunits; these bridges are implicated in subunit movement. Contacts the tRNAs in the A and P-sites.</text>
</comment>
<comment type="subunit">
    <text evidence="1">Part of the 30S ribosomal subunit. Forms a loose heterodimer with protein S19. Forms two bridges to the 50S subunit in the 70S ribosome.</text>
</comment>
<comment type="similarity">
    <text evidence="1">Belongs to the universal ribosomal protein uS13 family.</text>
</comment>
<feature type="chain" id="PRO_1000141329" description="Small ribosomal subunit protein uS13">
    <location>
        <begin position="1"/>
        <end position="118"/>
    </location>
</feature>
<feature type="region of interest" description="Disordered" evidence="2">
    <location>
        <begin position="94"/>
        <end position="118"/>
    </location>
</feature>
<keyword id="KW-0687">Ribonucleoprotein</keyword>
<keyword id="KW-0689">Ribosomal protein</keyword>
<keyword id="KW-0694">RNA-binding</keyword>
<keyword id="KW-0699">rRNA-binding</keyword>
<keyword id="KW-0820">tRNA-binding</keyword>
<protein>
    <recommendedName>
        <fullName evidence="1">Small ribosomal subunit protein uS13</fullName>
    </recommendedName>
    <alternativeName>
        <fullName evidence="3">30S ribosomal protein S13</fullName>
    </alternativeName>
</protein>
<evidence type="ECO:0000255" key="1">
    <source>
        <dbReference type="HAMAP-Rule" id="MF_01315"/>
    </source>
</evidence>
<evidence type="ECO:0000256" key="2">
    <source>
        <dbReference type="SAM" id="MobiDB-lite"/>
    </source>
</evidence>
<evidence type="ECO:0000305" key="3"/>
<sequence length="118" mass="13375">MARIAGVNLPAQKHVWVGLQSIYGIGRTRSKKLCESAGVTSTTKIRDLSEPEIERLRAEVGKYVVEGDLRREIGIAIKRLMDLGCYRGLRHRRGLPLRGQRTRTNARTRKGPRKAIRK</sequence>
<organism>
    <name type="scientific">Xanthomonas campestris pv. campestris (strain B100)</name>
    <dbReference type="NCBI Taxonomy" id="509169"/>
    <lineage>
        <taxon>Bacteria</taxon>
        <taxon>Pseudomonadati</taxon>
        <taxon>Pseudomonadota</taxon>
        <taxon>Gammaproteobacteria</taxon>
        <taxon>Lysobacterales</taxon>
        <taxon>Lysobacteraceae</taxon>
        <taxon>Xanthomonas</taxon>
    </lineage>
</organism>
<gene>
    <name evidence="1" type="primary">rpsM</name>
    <name type="ordered locus">xcc-b100_3438</name>
</gene>
<proteinExistence type="inferred from homology"/>
<accession>B0RU61</accession>
<name>RS13_XANCB</name>
<reference key="1">
    <citation type="journal article" date="2008" name="J. Biotechnol.">
        <title>The genome of Xanthomonas campestris pv. campestris B100 and its use for the reconstruction of metabolic pathways involved in xanthan biosynthesis.</title>
        <authorList>
            <person name="Vorhoelter F.-J."/>
            <person name="Schneiker S."/>
            <person name="Goesmann A."/>
            <person name="Krause L."/>
            <person name="Bekel T."/>
            <person name="Kaiser O."/>
            <person name="Linke B."/>
            <person name="Patschkowski T."/>
            <person name="Rueckert C."/>
            <person name="Schmid J."/>
            <person name="Sidhu V.K."/>
            <person name="Sieber V."/>
            <person name="Tauch A."/>
            <person name="Watt S.A."/>
            <person name="Weisshaar B."/>
            <person name="Becker A."/>
            <person name="Niehaus K."/>
            <person name="Puehler A."/>
        </authorList>
    </citation>
    <scope>NUCLEOTIDE SEQUENCE [LARGE SCALE GENOMIC DNA]</scope>
    <source>
        <strain>B100</strain>
    </source>
</reference>